<dbReference type="TCDB" id="1.C.52.1.17">
    <property type="family name" value="the dermaseptin (dermaseptin) family"/>
</dbReference>
<dbReference type="GO" id="GO:0005576">
    <property type="term" value="C:extracellular region"/>
    <property type="evidence" value="ECO:0000314"/>
    <property type="project" value="UniProtKB"/>
</dbReference>
<dbReference type="GO" id="GO:0006952">
    <property type="term" value="P:defense response"/>
    <property type="evidence" value="ECO:0007669"/>
    <property type="project" value="UniProtKB-KW"/>
</dbReference>
<dbReference type="GO" id="GO:0045933">
    <property type="term" value="P:positive regulation of muscle contraction"/>
    <property type="evidence" value="ECO:0000314"/>
    <property type="project" value="UniProtKB"/>
</dbReference>
<dbReference type="GO" id="GO:0042311">
    <property type="term" value="P:vasodilation"/>
    <property type="evidence" value="ECO:0007669"/>
    <property type="project" value="UniProtKB-KW"/>
</dbReference>
<dbReference type="InterPro" id="IPR004275">
    <property type="entry name" value="Frog_antimicrobial_propeptide"/>
</dbReference>
<dbReference type="Pfam" id="PF03032">
    <property type="entry name" value="FSAP_sig_propep"/>
    <property type="match status" value="1"/>
</dbReference>
<evidence type="ECO:0000255" key="1"/>
<evidence type="ECO:0000256" key="2">
    <source>
        <dbReference type="SAM" id="MobiDB-lite"/>
    </source>
</evidence>
<evidence type="ECO:0000269" key="3">
    <source>
    </source>
</evidence>
<evidence type="ECO:0000303" key="4">
    <source>
    </source>
</evidence>
<evidence type="ECO:0000305" key="5"/>
<keyword id="KW-0878">Amphibian defense peptide</keyword>
<keyword id="KW-0165">Cleavage on pair of basic residues</keyword>
<keyword id="KW-0903">Direct protein sequencing</keyword>
<keyword id="KW-0964">Secreted</keyword>
<keyword id="KW-0732">Signal</keyword>
<keyword id="KW-0838">Vasoactive</keyword>
<keyword id="KW-0840">Vasodilator</keyword>
<comment type="function">
    <text evidence="3">Induces contraction of intestinal smooth muscle in isolated guinea pig ileum. May induce relaxation of arterial smooth muscle. May target bradykinin receptors (BDKRB). Lacks antibacterial activity against the Gram-positive bacterium S.aureus and the Gram-negative bacteria E.coli and B.dysenteria, and antifungal activity against C.albicans.</text>
</comment>
<comment type="subcellular location">
    <subcellularLocation>
        <location evidence="3">Secreted</location>
    </subcellularLocation>
</comment>
<comment type="tissue specificity">
    <text evidence="3">Expressed by the skin glands.</text>
</comment>
<comment type="mass spectrometry" mass="1442.5" method="FAB" evidence="3"/>
<comment type="similarity">
    <text evidence="1">Belongs to the bradykinin family.</text>
</comment>
<feature type="signal peptide" evidence="1">
    <location>
        <begin position="1"/>
        <end position="22"/>
    </location>
</feature>
<feature type="propeptide" id="PRO_0000363162" evidence="1 3">
    <location>
        <begin position="23"/>
        <end position="43"/>
    </location>
</feature>
<feature type="peptide" id="PRO_0000363163" description="Ranakinin-N" evidence="3">
    <location>
        <begin position="44"/>
        <end position="58"/>
    </location>
</feature>
<feature type="region of interest" description="Disordered" evidence="2">
    <location>
        <begin position="25"/>
        <end position="58"/>
    </location>
</feature>
<feature type="compositionally biased region" description="Basic and acidic residues" evidence="2">
    <location>
        <begin position="35"/>
        <end position="46"/>
    </location>
</feature>
<proteinExistence type="evidence at protein level"/>
<protein>
    <recommendedName>
        <fullName evidence="4">Ranakinin-N</fullName>
    </recommendedName>
</protein>
<organism>
    <name type="scientific">Hylarana nigrovittata</name>
    <name type="common">Black-striped frog</name>
    <name type="synonym">Sylvirana nigrovittata</name>
    <dbReference type="NCBI Taxonomy" id="127021"/>
    <lineage>
        <taxon>Eukaryota</taxon>
        <taxon>Metazoa</taxon>
        <taxon>Chordata</taxon>
        <taxon>Craniata</taxon>
        <taxon>Vertebrata</taxon>
        <taxon>Euteleostomi</taxon>
        <taxon>Amphibia</taxon>
        <taxon>Batrachia</taxon>
        <taxon>Anura</taxon>
        <taxon>Neobatrachia</taxon>
        <taxon>Ranoidea</taxon>
        <taxon>Ranidae</taxon>
        <taxon>Hylarana</taxon>
    </lineage>
</organism>
<sequence length="58" mass="6641">MFTMKKSLLLLFFLGTISMSLCEEKRDADEEETEGEAKMEDIKRAEAVPPGFTPFRKP</sequence>
<accession>P86093</accession>
<reference evidence="5" key="1">
    <citation type="journal article" date="2008" name="J. Pept. Sci.">
        <title>A novel bradykinin-like peptide from skin secretions of the frog, Rana nigrovittata.</title>
        <authorList>
            <person name="Liu X."/>
            <person name="You D."/>
            <person name="Chen L."/>
            <person name="Wang X."/>
            <person name="Zhang K."/>
            <person name="Lai R."/>
        </authorList>
    </citation>
    <scope>NUCLEOTIDE SEQUENCE [MRNA]</scope>
    <scope>PROTEIN SEQUENCE OF 44-56</scope>
    <scope>FUNCTION</scope>
    <scope>SUBCELLULAR LOCATION</scope>
    <scope>TISSUE SPECIFICITY</scope>
    <scope>MASS SPECTROMETRY</scope>
    <source>
        <tissue evidence="3">Skin secretion</tissue>
    </source>
</reference>
<name>BRKRN_HYLNG</name>